<keyword id="KW-0010">Activator</keyword>
<keyword id="KW-0014">AIDS</keyword>
<keyword id="KW-0053">Apoptosis</keyword>
<keyword id="KW-0131">Cell cycle</keyword>
<keyword id="KW-1079">Host G2/M cell cycle arrest by virus</keyword>
<keyword id="KW-1048">Host nucleus</keyword>
<keyword id="KW-0945">Host-virus interaction</keyword>
<keyword id="KW-0407">Ion channel</keyword>
<keyword id="KW-0406">Ion transport</keyword>
<keyword id="KW-1121">Modulation of host cell cycle by virus</keyword>
<keyword id="KW-0597">Phosphoprotein</keyword>
<keyword id="KW-0804">Transcription</keyword>
<keyword id="KW-0805">Transcription regulation</keyword>
<keyword id="KW-0813">Transport</keyword>
<keyword id="KW-1163">Viral penetration into host nucleus</keyword>
<keyword id="KW-0946">Virion</keyword>
<keyword id="KW-1160">Virus entry into host cell</keyword>
<dbReference type="EMBL" id="M38429">
    <property type="protein sequence ID" value="AAB03747.1"/>
    <property type="molecule type" value="Genomic_RNA"/>
</dbReference>
<dbReference type="BMRB" id="P20883"/>
<dbReference type="SMR" id="P20883"/>
<dbReference type="Proteomes" id="UP000007695">
    <property type="component" value="Genome"/>
</dbReference>
<dbReference type="GO" id="GO:0043657">
    <property type="term" value="C:host cell"/>
    <property type="evidence" value="ECO:0007669"/>
    <property type="project" value="GOC"/>
</dbReference>
<dbReference type="GO" id="GO:0042025">
    <property type="term" value="C:host cell nucleus"/>
    <property type="evidence" value="ECO:0007669"/>
    <property type="project" value="UniProtKB-SubCell"/>
</dbReference>
<dbReference type="GO" id="GO:0043655">
    <property type="term" value="C:host extracellular space"/>
    <property type="evidence" value="ECO:0007669"/>
    <property type="project" value="UniProtKB-SubCell"/>
</dbReference>
<dbReference type="GO" id="GO:0044423">
    <property type="term" value="C:virion component"/>
    <property type="evidence" value="ECO:0007669"/>
    <property type="project" value="UniProtKB-UniRule"/>
</dbReference>
<dbReference type="GO" id="GO:0006351">
    <property type="term" value="P:DNA-templated transcription"/>
    <property type="evidence" value="ECO:0007669"/>
    <property type="project" value="UniProtKB-UniRule"/>
</dbReference>
<dbReference type="GO" id="GO:0034220">
    <property type="term" value="P:monoatomic ion transmembrane transport"/>
    <property type="evidence" value="ECO:0007669"/>
    <property type="project" value="UniProtKB-KW"/>
</dbReference>
<dbReference type="GO" id="GO:0051260">
    <property type="term" value="P:protein homooligomerization"/>
    <property type="evidence" value="ECO:0007669"/>
    <property type="project" value="UniProtKB-UniRule"/>
</dbReference>
<dbReference type="GO" id="GO:0006355">
    <property type="term" value="P:regulation of DNA-templated transcription"/>
    <property type="evidence" value="ECO:0007669"/>
    <property type="project" value="UniProtKB-UniRule"/>
</dbReference>
<dbReference type="GO" id="GO:0046718">
    <property type="term" value="P:symbiont entry into host cell"/>
    <property type="evidence" value="ECO:0007669"/>
    <property type="project" value="UniProtKB-KW"/>
</dbReference>
<dbReference type="GO" id="GO:0052151">
    <property type="term" value="P:symbiont-mediated activation of host apoptosis"/>
    <property type="evidence" value="ECO:0007669"/>
    <property type="project" value="UniProtKB-UniRule"/>
</dbReference>
<dbReference type="GO" id="GO:0039592">
    <property type="term" value="P:symbiont-mediated arrest of host cell cycle during G2/M transition"/>
    <property type="evidence" value="ECO:0007669"/>
    <property type="project" value="UniProtKB-UniRule"/>
</dbReference>
<dbReference type="GO" id="GO:0075732">
    <property type="term" value="P:viral penetration into host nucleus"/>
    <property type="evidence" value="ECO:0007669"/>
    <property type="project" value="UniProtKB-UniRule"/>
</dbReference>
<dbReference type="FunFam" id="1.20.5.90:FF:000001">
    <property type="entry name" value="Protein Vpr"/>
    <property type="match status" value="1"/>
</dbReference>
<dbReference type="Gene3D" id="6.10.210.10">
    <property type="match status" value="1"/>
</dbReference>
<dbReference type="Gene3D" id="1.20.5.90">
    <property type="entry name" value="VpR/VpX protein, C-terminal domain"/>
    <property type="match status" value="1"/>
</dbReference>
<dbReference type="HAMAP" id="MF_04080">
    <property type="entry name" value="HIV_VPR"/>
    <property type="match status" value="1"/>
</dbReference>
<dbReference type="InterPro" id="IPR000012">
    <property type="entry name" value="RetroV_VpR/X"/>
</dbReference>
<dbReference type="Pfam" id="PF00522">
    <property type="entry name" value="VPR"/>
    <property type="match status" value="1"/>
</dbReference>
<dbReference type="PRINTS" id="PR00444">
    <property type="entry name" value="HIVVPRVPX"/>
</dbReference>
<organismHost>
    <name type="scientific">Homo sapiens</name>
    <name type="common">Human</name>
    <dbReference type="NCBI Taxonomy" id="9606"/>
</organismHost>
<protein>
    <recommendedName>
        <fullName evidence="1">Protein Vpr</fullName>
    </recommendedName>
    <alternativeName>
        <fullName evidence="1">R ORF protein</fullName>
    </alternativeName>
    <alternativeName>
        <fullName evidence="1">Viral protein R</fullName>
    </alternativeName>
</protein>
<name>VPR_HV1JR</name>
<sequence>MEQAPEDQGPQREPYNEWTLELLEELKNEAVRHFPRIWLHSLGQYIYETYGDTWAGVEAIIRILQQLLFIHFRIGCRHSRIGITRQRRARNGASRS</sequence>
<proteinExistence type="inferred from homology"/>
<organism>
    <name type="scientific">Human immunodeficiency virus type 1 group M subtype B (isolate JRCSF)</name>
    <name type="common">HIV-1</name>
    <dbReference type="NCBI Taxonomy" id="11688"/>
    <lineage>
        <taxon>Viruses</taxon>
        <taxon>Riboviria</taxon>
        <taxon>Pararnavirae</taxon>
        <taxon>Artverviricota</taxon>
        <taxon>Revtraviricetes</taxon>
        <taxon>Ortervirales</taxon>
        <taxon>Retroviridae</taxon>
        <taxon>Orthoretrovirinae</taxon>
        <taxon>Lentivirus</taxon>
        <taxon>Human immunodeficiency virus type 1</taxon>
    </lineage>
</organism>
<evidence type="ECO:0000255" key="1">
    <source>
        <dbReference type="HAMAP-Rule" id="MF_04080"/>
    </source>
</evidence>
<feature type="chain" id="PRO_0000085441" description="Protein Vpr">
    <location>
        <begin position="1"/>
        <end position="96"/>
    </location>
</feature>
<feature type="region of interest" description="Homooligomerization" evidence="1">
    <location>
        <begin position="1"/>
        <end position="42"/>
    </location>
</feature>
<feature type="modified residue" description="Phosphoserine; by host" evidence="1">
    <location>
        <position position="79"/>
    </location>
</feature>
<feature type="modified residue" description="Phosphoserine; by host" evidence="1">
    <location>
        <position position="94"/>
    </location>
</feature>
<feature type="modified residue" description="Phosphoserine; by host" evidence="1">
    <location>
        <position position="96"/>
    </location>
</feature>
<reference key="1">
    <citation type="submission" date="1988-12" db="EMBL/GenBank/DDBJ databases">
        <authorList>
            <person name="Koyanagi S."/>
            <person name="Chen I.S.Y."/>
        </authorList>
    </citation>
    <scope>NUCLEOTIDE SEQUENCE [GENOMIC RNA]</scope>
</reference>
<accession>P20883</accession>
<comment type="function">
    <text evidence="1">During virus replication, may deplete host UNG protein, and incude G2-M cell cycle arrest. Acts by targeting specific host proteins for degradation by the 26S proteasome, through association with the cellular CUL4A-DDB1 E3 ligase complex by direct interaction with host VPRPB/DCAF-1. Cell cycle arrest reportedly occurs within hours of infection and is not blocked by antiviral agents, suggesting that it is initiated by the VPR carried into the virion. Additionally, VPR induces apoptosis in a cell cycle dependent manner suggesting that these two effects are mechanistically linked. Detected in the serum and cerebrospinal fluid of AIDS patient, VPR may also induce cell death to bystander cells.</text>
</comment>
<comment type="function">
    <text evidence="1">During virus entry, plays a role in the transport of the viral pre-integration (PIC) complex to the host nucleus. This function is crucial for viral infection of non-dividing macrophages. May act directly at the nuclear pore complex, by binding nucleoporins phenylalanine-glycine (FG)-repeat regions.</text>
</comment>
<comment type="subunit">
    <text evidence="1">Homooligomer, may form homodimer. Interacts with p6-gag region of the Pr55 Gag precursor protein through a (Leu-X-X)4 motif near the C-terminus of the P6gag protein. Interacts with host UNG. May interact with host RAD23A/HHR23A. Interacts with host VPRBP/DCAF1, leading to hijack the CUL4A-RBX1-DDB1-DCAF1/VPRBP complex, mediating ubiquitination of host proteins such as TERT and ZGPAT and arrest of the cell cycle in G2 phase.</text>
</comment>
<comment type="subcellular location">
    <subcellularLocation>
        <location evidence="1">Virion</location>
    </subcellularLocation>
    <subcellularLocation>
        <location evidence="1">Host nucleus</location>
    </subcellularLocation>
    <subcellularLocation>
        <location evidence="1">Host extracellular space</location>
    </subcellularLocation>
    <text evidence="1">Incorporation into virion is dependent on p6 GAG sequences. Lacks a canonical nuclear localization signal, thus import into nucleus may function independently of the human importin pathway. Detected in high quantity in the serum and cerebrospinal fluid of AIDS patient.</text>
</comment>
<comment type="PTM">
    <text evidence="1">Phosphorylated on several residues by host. These phosphorylations regulate VPR activity for the nuclear import of the HIV-1 pre-integration complex.</text>
</comment>
<comment type="miscellaneous">
    <text evidence="1">HIV-1 lineages are divided in three main groups, M (for Major), O (for Outlier), and N (for New, or Non-M, Non-O). The vast majority of strains found worldwide belong to the group M. Group O seems to be endemic to and largely confined to Cameroon and neighboring countries in West Central Africa, where these viruses represent a small minority of HIV-1 strains. The group N is represented by a limited number of isolates from Cameroonian persons. The group M is further subdivided in 9 clades or subtypes (A to D, F to H, J and K).</text>
</comment>
<comment type="similarity">
    <text evidence="1">Belongs to the HIV-1 VPR protein family.</text>
</comment>
<gene>
    <name evidence="1" type="primary">vpr</name>
</gene>